<proteinExistence type="inferred from homology"/>
<name>RECF_STREM</name>
<reference key="1">
    <citation type="journal article" date="2008" name="PLoS ONE">
        <title>Genome sequence of a lancefield group C Streptococcus zooepidemicus strain causing epidemic nephritis: new information about an old disease.</title>
        <authorList>
            <person name="Beres S.B."/>
            <person name="Sesso R."/>
            <person name="Pinto S.W.L."/>
            <person name="Hoe N.P."/>
            <person name="Porcella S.F."/>
            <person name="Deleo F.R."/>
            <person name="Musser J.M."/>
        </authorList>
    </citation>
    <scope>NUCLEOTIDE SEQUENCE [LARGE SCALE GENOMIC DNA]</scope>
    <source>
        <strain>MGCS10565</strain>
    </source>
</reference>
<evidence type="ECO:0000255" key="1">
    <source>
        <dbReference type="HAMAP-Rule" id="MF_00365"/>
    </source>
</evidence>
<protein>
    <recommendedName>
        <fullName evidence="1">DNA replication and repair protein RecF</fullName>
    </recommendedName>
</protein>
<comment type="function">
    <text evidence="1">The RecF protein is involved in DNA metabolism; it is required for DNA replication and normal SOS inducibility. RecF binds preferentially to single-stranded, linear DNA. It also seems to bind ATP.</text>
</comment>
<comment type="subcellular location">
    <subcellularLocation>
        <location evidence="1">Cytoplasm</location>
    </subcellularLocation>
</comment>
<comment type="similarity">
    <text evidence="1">Belongs to the RecF family.</text>
</comment>
<dbReference type="EMBL" id="CP001129">
    <property type="protein sequence ID" value="ACG63265.1"/>
    <property type="molecule type" value="Genomic_DNA"/>
</dbReference>
<dbReference type="RefSeq" id="WP_012516506.1">
    <property type="nucleotide sequence ID" value="NC_011134.1"/>
</dbReference>
<dbReference type="SMR" id="B4U113"/>
<dbReference type="KEGG" id="sez:Sez_1946"/>
<dbReference type="HOGENOM" id="CLU_040267_0_1_9"/>
<dbReference type="Proteomes" id="UP000001873">
    <property type="component" value="Chromosome"/>
</dbReference>
<dbReference type="GO" id="GO:0005737">
    <property type="term" value="C:cytoplasm"/>
    <property type="evidence" value="ECO:0007669"/>
    <property type="project" value="UniProtKB-SubCell"/>
</dbReference>
<dbReference type="GO" id="GO:0005524">
    <property type="term" value="F:ATP binding"/>
    <property type="evidence" value="ECO:0007669"/>
    <property type="project" value="UniProtKB-UniRule"/>
</dbReference>
<dbReference type="GO" id="GO:0003697">
    <property type="term" value="F:single-stranded DNA binding"/>
    <property type="evidence" value="ECO:0007669"/>
    <property type="project" value="UniProtKB-UniRule"/>
</dbReference>
<dbReference type="GO" id="GO:0006260">
    <property type="term" value="P:DNA replication"/>
    <property type="evidence" value="ECO:0007669"/>
    <property type="project" value="UniProtKB-UniRule"/>
</dbReference>
<dbReference type="GO" id="GO:0000731">
    <property type="term" value="P:DNA synthesis involved in DNA repair"/>
    <property type="evidence" value="ECO:0007669"/>
    <property type="project" value="TreeGrafter"/>
</dbReference>
<dbReference type="GO" id="GO:0006302">
    <property type="term" value="P:double-strand break repair"/>
    <property type="evidence" value="ECO:0007669"/>
    <property type="project" value="TreeGrafter"/>
</dbReference>
<dbReference type="GO" id="GO:0009432">
    <property type="term" value="P:SOS response"/>
    <property type="evidence" value="ECO:0007669"/>
    <property type="project" value="UniProtKB-UniRule"/>
</dbReference>
<dbReference type="CDD" id="cd03242">
    <property type="entry name" value="ABC_RecF"/>
    <property type="match status" value="1"/>
</dbReference>
<dbReference type="Gene3D" id="3.40.50.300">
    <property type="entry name" value="P-loop containing nucleotide triphosphate hydrolases"/>
    <property type="match status" value="1"/>
</dbReference>
<dbReference type="Gene3D" id="1.20.1050.90">
    <property type="entry name" value="RecF/RecN/SMC, N-terminal domain"/>
    <property type="match status" value="1"/>
</dbReference>
<dbReference type="HAMAP" id="MF_00365">
    <property type="entry name" value="RecF"/>
    <property type="match status" value="1"/>
</dbReference>
<dbReference type="InterPro" id="IPR001238">
    <property type="entry name" value="DNA-binding_RecF"/>
</dbReference>
<dbReference type="InterPro" id="IPR018078">
    <property type="entry name" value="DNA-binding_RecF_CS"/>
</dbReference>
<dbReference type="InterPro" id="IPR027417">
    <property type="entry name" value="P-loop_NTPase"/>
</dbReference>
<dbReference type="InterPro" id="IPR003395">
    <property type="entry name" value="RecF/RecN/SMC_N"/>
</dbReference>
<dbReference type="InterPro" id="IPR042174">
    <property type="entry name" value="RecF_2"/>
</dbReference>
<dbReference type="NCBIfam" id="TIGR00611">
    <property type="entry name" value="recf"/>
    <property type="match status" value="1"/>
</dbReference>
<dbReference type="PANTHER" id="PTHR32182">
    <property type="entry name" value="DNA REPLICATION AND REPAIR PROTEIN RECF"/>
    <property type="match status" value="1"/>
</dbReference>
<dbReference type="PANTHER" id="PTHR32182:SF0">
    <property type="entry name" value="DNA REPLICATION AND REPAIR PROTEIN RECF"/>
    <property type="match status" value="1"/>
</dbReference>
<dbReference type="Pfam" id="PF02463">
    <property type="entry name" value="SMC_N"/>
    <property type="match status" value="1"/>
</dbReference>
<dbReference type="SUPFAM" id="SSF52540">
    <property type="entry name" value="P-loop containing nucleoside triphosphate hydrolases"/>
    <property type="match status" value="1"/>
</dbReference>
<dbReference type="PROSITE" id="PS00617">
    <property type="entry name" value="RECF_1"/>
    <property type="match status" value="1"/>
</dbReference>
<dbReference type="PROSITE" id="PS00618">
    <property type="entry name" value="RECF_2"/>
    <property type="match status" value="1"/>
</dbReference>
<gene>
    <name evidence="1" type="primary">recF</name>
    <name type="ordered locus">Sez_1946</name>
</gene>
<sequence>MWIKELNLTHYRNYQQASAAFSPGLNVFIGDNAQGKTNFLEAIYFLSVTRSHRTKSDKDLIYFDERDCSISGTLERLSGRVQLEILLSDKGRITKINTLKQAKLSDYIGAMMVVLFAPEDLQLVKGSPSLRRKFMDIDLGQIKPVYLSDLSHYNHVLKQRNAYLKSVHQLDSDFLSVLDEQLVTYGSRVMAHRLAFVQSLAKEANKHHQAISNGLEKLSISYQASVSFEHQQEIYQQFMDQLKTTHQRDFLRKNTGVGPHRDDLIFYINGMNANFASQGQHRSLILSLKMAEVSLMKQLTGDNPILLLDDVMSELDNIRQTKLLEAVKKENVQTFITTTSLKHLSQLPKDISLFKVNKGTIALDSVMID</sequence>
<organism>
    <name type="scientific">Streptococcus equi subsp. zooepidemicus (strain MGCS10565)</name>
    <dbReference type="NCBI Taxonomy" id="552526"/>
    <lineage>
        <taxon>Bacteria</taxon>
        <taxon>Bacillati</taxon>
        <taxon>Bacillota</taxon>
        <taxon>Bacilli</taxon>
        <taxon>Lactobacillales</taxon>
        <taxon>Streptococcaceae</taxon>
        <taxon>Streptococcus</taxon>
    </lineage>
</organism>
<feature type="chain" id="PRO_1000121157" description="DNA replication and repair protein RecF">
    <location>
        <begin position="1"/>
        <end position="369"/>
    </location>
</feature>
<feature type="binding site" evidence="1">
    <location>
        <begin position="30"/>
        <end position="37"/>
    </location>
    <ligand>
        <name>ATP</name>
        <dbReference type="ChEBI" id="CHEBI:30616"/>
    </ligand>
</feature>
<accession>B4U113</accession>
<keyword id="KW-0067">ATP-binding</keyword>
<keyword id="KW-0963">Cytoplasm</keyword>
<keyword id="KW-0227">DNA damage</keyword>
<keyword id="KW-0234">DNA repair</keyword>
<keyword id="KW-0235">DNA replication</keyword>
<keyword id="KW-0238">DNA-binding</keyword>
<keyword id="KW-0547">Nucleotide-binding</keyword>
<keyword id="KW-0742">SOS response</keyword>